<dbReference type="EC" id="6.3.2.4" evidence="2"/>
<dbReference type="EMBL" id="BX950851">
    <property type="protein sequence ID" value="CAG76712.1"/>
    <property type="molecule type" value="Genomic_DNA"/>
</dbReference>
<dbReference type="RefSeq" id="WP_011095313.1">
    <property type="nucleotide sequence ID" value="NC_004547.2"/>
</dbReference>
<dbReference type="SMR" id="Q6D0I5"/>
<dbReference type="STRING" id="218491.ECA3813"/>
<dbReference type="KEGG" id="eca:ECA3813"/>
<dbReference type="PATRIC" id="fig|218491.5.peg.3868"/>
<dbReference type="eggNOG" id="COG1181">
    <property type="taxonomic scope" value="Bacteria"/>
</dbReference>
<dbReference type="HOGENOM" id="CLU_039268_1_2_6"/>
<dbReference type="OrthoDB" id="9813261at2"/>
<dbReference type="UniPathway" id="UPA00219"/>
<dbReference type="Proteomes" id="UP000007966">
    <property type="component" value="Chromosome"/>
</dbReference>
<dbReference type="GO" id="GO:0005829">
    <property type="term" value="C:cytosol"/>
    <property type="evidence" value="ECO:0007669"/>
    <property type="project" value="TreeGrafter"/>
</dbReference>
<dbReference type="GO" id="GO:0005524">
    <property type="term" value="F:ATP binding"/>
    <property type="evidence" value="ECO:0007669"/>
    <property type="project" value="UniProtKB-KW"/>
</dbReference>
<dbReference type="GO" id="GO:0008716">
    <property type="term" value="F:D-alanine-D-alanine ligase activity"/>
    <property type="evidence" value="ECO:0007669"/>
    <property type="project" value="UniProtKB-UniRule"/>
</dbReference>
<dbReference type="GO" id="GO:0046872">
    <property type="term" value="F:metal ion binding"/>
    <property type="evidence" value="ECO:0007669"/>
    <property type="project" value="UniProtKB-KW"/>
</dbReference>
<dbReference type="GO" id="GO:0071555">
    <property type="term" value="P:cell wall organization"/>
    <property type="evidence" value="ECO:0007669"/>
    <property type="project" value="UniProtKB-KW"/>
</dbReference>
<dbReference type="GO" id="GO:0009252">
    <property type="term" value="P:peptidoglycan biosynthetic process"/>
    <property type="evidence" value="ECO:0007669"/>
    <property type="project" value="UniProtKB-UniRule"/>
</dbReference>
<dbReference type="GO" id="GO:0008360">
    <property type="term" value="P:regulation of cell shape"/>
    <property type="evidence" value="ECO:0007669"/>
    <property type="project" value="UniProtKB-KW"/>
</dbReference>
<dbReference type="FunFam" id="3.30.1490.20:FF:000007">
    <property type="entry name" value="D-alanine--D-alanine ligase"/>
    <property type="match status" value="1"/>
</dbReference>
<dbReference type="FunFam" id="3.30.470.20:FF:000008">
    <property type="entry name" value="D-alanine--D-alanine ligase"/>
    <property type="match status" value="1"/>
</dbReference>
<dbReference type="FunFam" id="3.40.50.20:FF:000013">
    <property type="entry name" value="D-alanine--D-alanine ligase"/>
    <property type="match status" value="1"/>
</dbReference>
<dbReference type="Gene3D" id="3.40.50.20">
    <property type="match status" value="1"/>
</dbReference>
<dbReference type="Gene3D" id="3.30.1490.20">
    <property type="entry name" value="ATP-grasp fold, A domain"/>
    <property type="match status" value="1"/>
</dbReference>
<dbReference type="Gene3D" id="3.30.470.20">
    <property type="entry name" value="ATP-grasp fold, B domain"/>
    <property type="match status" value="1"/>
</dbReference>
<dbReference type="HAMAP" id="MF_00047">
    <property type="entry name" value="Dala_Dala_lig"/>
    <property type="match status" value="1"/>
</dbReference>
<dbReference type="InterPro" id="IPR011761">
    <property type="entry name" value="ATP-grasp"/>
</dbReference>
<dbReference type="InterPro" id="IPR013815">
    <property type="entry name" value="ATP_grasp_subdomain_1"/>
</dbReference>
<dbReference type="InterPro" id="IPR000291">
    <property type="entry name" value="D-Ala_lig_Van_CS"/>
</dbReference>
<dbReference type="InterPro" id="IPR005905">
    <property type="entry name" value="D_ala_D_ala"/>
</dbReference>
<dbReference type="InterPro" id="IPR011095">
    <property type="entry name" value="Dala_Dala_lig_C"/>
</dbReference>
<dbReference type="InterPro" id="IPR011127">
    <property type="entry name" value="Dala_Dala_lig_N"/>
</dbReference>
<dbReference type="InterPro" id="IPR016185">
    <property type="entry name" value="PreATP-grasp_dom_sf"/>
</dbReference>
<dbReference type="NCBIfam" id="TIGR01205">
    <property type="entry name" value="D_ala_D_alaTIGR"/>
    <property type="match status" value="1"/>
</dbReference>
<dbReference type="NCBIfam" id="NF002378">
    <property type="entry name" value="PRK01372.1"/>
    <property type="match status" value="1"/>
</dbReference>
<dbReference type="PANTHER" id="PTHR23132">
    <property type="entry name" value="D-ALANINE--D-ALANINE LIGASE"/>
    <property type="match status" value="1"/>
</dbReference>
<dbReference type="PANTHER" id="PTHR23132:SF23">
    <property type="entry name" value="D-ALANINE--D-ALANINE LIGASE B"/>
    <property type="match status" value="1"/>
</dbReference>
<dbReference type="Pfam" id="PF07478">
    <property type="entry name" value="Dala_Dala_lig_C"/>
    <property type="match status" value="1"/>
</dbReference>
<dbReference type="Pfam" id="PF01820">
    <property type="entry name" value="Dala_Dala_lig_N"/>
    <property type="match status" value="1"/>
</dbReference>
<dbReference type="PIRSF" id="PIRSF039102">
    <property type="entry name" value="Ddl/VanB"/>
    <property type="match status" value="1"/>
</dbReference>
<dbReference type="SUPFAM" id="SSF56059">
    <property type="entry name" value="Glutathione synthetase ATP-binding domain-like"/>
    <property type="match status" value="1"/>
</dbReference>
<dbReference type="SUPFAM" id="SSF52440">
    <property type="entry name" value="PreATP-grasp domain"/>
    <property type="match status" value="1"/>
</dbReference>
<dbReference type="PROSITE" id="PS50975">
    <property type="entry name" value="ATP_GRASP"/>
    <property type="match status" value="1"/>
</dbReference>
<dbReference type="PROSITE" id="PS00843">
    <property type="entry name" value="DALA_DALA_LIGASE_1"/>
    <property type="match status" value="1"/>
</dbReference>
<dbReference type="PROSITE" id="PS00844">
    <property type="entry name" value="DALA_DALA_LIGASE_2"/>
    <property type="match status" value="1"/>
</dbReference>
<protein>
    <recommendedName>
        <fullName evidence="2">D-alanine--D-alanine ligase</fullName>
        <ecNumber evidence="2">6.3.2.4</ecNumber>
    </recommendedName>
    <alternativeName>
        <fullName evidence="2">D-Ala-D-Ala ligase</fullName>
    </alternativeName>
    <alternativeName>
        <fullName evidence="2">D-alanylalanine synthetase</fullName>
    </alternativeName>
</protein>
<evidence type="ECO:0000250" key="1"/>
<evidence type="ECO:0000255" key="2">
    <source>
        <dbReference type="HAMAP-Rule" id="MF_00047"/>
    </source>
</evidence>
<sequence>MTEKVAVLLGGTSAEREVSLLSGQAVLAGLKEAGINAHAVDTRDFPVTTLKEEGFTNVFIALHGRGGEDGTLQGVLEFLGLPYTGSGVMASALTMDKLRTKQVWQAVGLPVSPYVALDRRQYLDTEANTLLAQFTHLGLPLIVKPSREGSSVGMSKVNTLSDLPAALEEAFRHDDDVLVEKWLSGPEYTVAILGDEVLPSIRIQPAGTFYDYEAKYLSDDTQYFCPSGLSDEQEQALAALAMAAYRAVDCSGWGRVDFMLDSDDAFYLLEVNTSPGMTSHSLVPMAARQRGLTFSQLVVKILELAG</sequence>
<name>DDL_PECAS</name>
<feature type="chain" id="PRO_1000030448" description="D-alanine--D-alanine ligase">
    <location>
        <begin position="1"/>
        <end position="306"/>
    </location>
</feature>
<feature type="domain" description="ATP-grasp" evidence="2">
    <location>
        <begin position="101"/>
        <end position="303"/>
    </location>
</feature>
<feature type="binding site" evidence="2">
    <location>
        <begin position="134"/>
        <end position="189"/>
    </location>
    <ligand>
        <name>ATP</name>
        <dbReference type="ChEBI" id="CHEBI:30616"/>
    </ligand>
</feature>
<feature type="binding site" evidence="2">
    <location>
        <position position="257"/>
    </location>
    <ligand>
        <name>Mg(2+)</name>
        <dbReference type="ChEBI" id="CHEBI:18420"/>
        <label>1</label>
    </ligand>
</feature>
<feature type="binding site" evidence="2">
    <location>
        <position position="270"/>
    </location>
    <ligand>
        <name>Mg(2+)</name>
        <dbReference type="ChEBI" id="CHEBI:18420"/>
        <label>1</label>
    </ligand>
</feature>
<feature type="binding site" evidence="2">
    <location>
        <position position="270"/>
    </location>
    <ligand>
        <name>Mg(2+)</name>
        <dbReference type="ChEBI" id="CHEBI:18420"/>
        <label>2</label>
    </ligand>
</feature>
<feature type="binding site" evidence="2">
    <location>
        <position position="272"/>
    </location>
    <ligand>
        <name>Mg(2+)</name>
        <dbReference type="ChEBI" id="CHEBI:18420"/>
        <label>2</label>
    </ligand>
</feature>
<accession>Q6D0I5</accession>
<organism>
    <name type="scientific">Pectobacterium atrosepticum (strain SCRI 1043 / ATCC BAA-672)</name>
    <name type="common">Erwinia carotovora subsp. atroseptica</name>
    <dbReference type="NCBI Taxonomy" id="218491"/>
    <lineage>
        <taxon>Bacteria</taxon>
        <taxon>Pseudomonadati</taxon>
        <taxon>Pseudomonadota</taxon>
        <taxon>Gammaproteobacteria</taxon>
        <taxon>Enterobacterales</taxon>
        <taxon>Pectobacteriaceae</taxon>
        <taxon>Pectobacterium</taxon>
    </lineage>
</organism>
<keyword id="KW-0067">ATP-binding</keyword>
<keyword id="KW-0133">Cell shape</keyword>
<keyword id="KW-0961">Cell wall biogenesis/degradation</keyword>
<keyword id="KW-0963">Cytoplasm</keyword>
<keyword id="KW-0436">Ligase</keyword>
<keyword id="KW-0460">Magnesium</keyword>
<keyword id="KW-0464">Manganese</keyword>
<keyword id="KW-0479">Metal-binding</keyword>
<keyword id="KW-0547">Nucleotide-binding</keyword>
<keyword id="KW-0573">Peptidoglycan synthesis</keyword>
<keyword id="KW-1185">Reference proteome</keyword>
<comment type="function">
    <text evidence="2">Cell wall formation.</text>
</comment>
<comment type="catalytic activity">
    <reaction evidence="2">
        <text>2 D-alanine + ATP = D-alanyl-D-alanine + ADP + phosphate + H(+)</text>
        <dbReference type="Rhea" id="RHEA:11224"/>
        <dbReference type="ChEBI" id="CHEBI:15378"/>
        <dbReference type="ChEBI" id="CHEBI:30616"/>
        <dbReference type="ChEBI" id="CHEBI:43474"/>
        <dbReference type="ChEBI" id="CHEBI:57416"/>
        <dbReference type="ChEBI" id="CHEBI:57822"/>
        <dbReference type="ChEBI" id="CHEBI:456216"/>
        <dbReference type="EC" id="6.3.2.4"/>
    </reaction>
</comment>
<comment type="cofactor">
    <cofactor evidence="1">
        <name>Mg(2+)</name>
        <dbReference type="ChEBI" id="CHEBI:18420"/>
    </cofactor>
    <cofactor evidence="1">
        <name>Mn(2+)</name>
        <dbReference type="ChEBI" id="CHEBI:29035"/>
    </cofactor>
    <text evidence="1">Binds 2 magnesium or manganese ions per subunit.</text>
</comment>
<comment type="pathway">
    <text evidence="2">Cell wall biogenesis; peptidoglycan biosynthesis.</text>
</comment>
<comment type="subcellular location">
    <subcellularLocation>
        <location evidence="2">Cytoplasm</location>
    </subcellularLocation>
</comment>
<comment type="similarity">
    <text evidence="2">Belongs to the D-alanine--D-alanine ligase family.</text>
</comment>
<gene>
    <name evidence="2" type="primary">ddl</name>
    <name type="ordered locus">ECA3813</name>
</gene>
<proteinExistence type="inferred from homology"/>
<reference key="1">
    <citation type="journal article" date="2004" name="Proc. Natl. Acad. Sci. U.S.A.">
        <title>Genome sequence of the enterobacterial phytopathogen Erwinia carotovora subsp. atroseptica and characterization of virulence factors.</title>
        <authorList>
            <person name="Bell K.S."/>
            <person name="Sebaihia M."/>
            <person name="Pritchard L."/>
            <person name="Holden M.T.G."/>
            <person name="Hyman L.J."/>
            <person name="Holeva M.C."/>
            <person name="Thomson N.R."/>
            <person name="Bentley S.D."/>
            <person name="Churcher L.J.C."/>
            <person name="Mungall K."/>
            <person name="Atkin R."/>
            <person name="Bason N."/>
            <person name="Brooks K."/>
            <person name="Chillingworth T."/>
            <person name="Clark K."/>
            <person name="Doggett J."/>
            <person name="Fraser A."/>
            <person name="Hance Z."/>
            <person name="Hauser H."/>
            <person name="Jagels K."/>
            <person name="Moule S."/>
            <person name="Norbertczak H."/>
            <person name="Ormond D."/>
            <person name="Price C."/>
            <person name="Quail M.A."/>
            <person name="Sanders M."/>
            <person name="Walker D."/>
            <person name="Whitehead S."/>
            <person name="Salmond G.P.C."/>
            <person name="Birch P.R.J."/>
            <person name="Parkhill J."/>
            <person name="Toth I.K."/>
        </authorList>
    </citation>
    <scope>NUCLEOTIDE SEQUENCE [LARGE SCALE GENOMIC DNA]</scope>
    <source>
        <strain>SCRI 1043 / ATCC BAA-672</strain>
    </source>
</reference>